<evidence type="ECO:0000256" key="1">
    <source>
        <dbReference type="SAM" id="MobiDB-lite"/>
    </source>
</evidence>
<evidence type="ECO:0000269" key="2">
    <source>
    </source>
</evidence>
<evidence type="ECO:0000269" key="3">
    <source>
    </source>
</evidence>
<evidence type="ECO:0000305" key="4"/>
<reference key="1">
    <citation type="journal article" date="2005" name="Nature">
        <title>The genome of the social amoeba Dictyostelium discoideum.</title>
        <authorList>
            <person name="Eichinger L."/>
            <person name="Pachebat J.A."/>
            <person name="Gloeckner G."/>
            <person name="Rajandream M.A."/>
            <person name="Sucgang R."/>
            <person name="Berriman M."/>
            <person name="Song J."/>
            <person name="Olsen R."/>
            <person name="Szafranski K."/>
            <person name="Xu Q."/>
            <person name="Tunggal B."/>
            <person name="Kummerfeld S."/>
            <person name="Madera M."/>
            <person name="Konfortov B.A."/>
            <person name="Rivero F."/>
            <person name="Bankier A.T."/>
            <person name="Lehmann R."/>
            <person name="Hamlin N."/>
            <person name="Davies R."/>
            <person name="Gaudet P."/>
            <person name="Fey P."/>
            <person name="Pilcher K."/>
            <person name="Chen G."/>
            <person name="Saunders D."/>
            <person name="Sodergren E.J."/>
            <person name="Davis P."/>
            <person name="Kerhornou A."/>
            <person name="Nie X."/>
            <person name="Hall N."/>
            <person name="Anjard C."/>
            <person name="Hemphill L."/>
            <person name="Bason N."/>
            <person name="Farbrother P."/>
            <person name="Desany B."/>
            <person name="Just E."/>
            <person name="Morio T."/>
            <person name="Rost R."/>
            <person name="Churcher C.M."/>
            <person name="Cooper J."/>
            <person name="Haydock S."/>
            <person name="van Driessche N."/>
            <person name="Cronin A."/>
            <person name="Goodhead I."/>
            <person name="Muzny D.M."/>
            <person name="Mourier T."/>
            <person name="Pain A."/>
            <person name="Lu M."/>
            <person name="Harper D."/>
            <person name="Lindsay R."/>
            <person name="Hauser H."/>
            <person name="James K.D."/>
            <person name="Quiles M."/>
            <person name="Madan Babu M."/>
            <person name="Saito T."/>
            <person name="Buchrieser C."/>
            <person name="Wardroper A."/>
            <person name="Felder M."/>
            <person name="Thangavelu M."/>
            <person name="Johnson D."/>
            <person name="Knights A."/>
            <person name="Loulseged H."/>
            <person name="Mungall K.L."/>
            <person name="Oliver K."/>
            <person name="Price C."/>
            <person name="Quail M.A."/>
            <person name="Urushihara H."/>
            <person name="Hernandez J."/>
            <person name="Rabbinowitsch E."/>
            <person name="Steffen D."/>
            <person name="Sanders M."/>
            <person name="Ma J."/>
            <person name="Kohara Y."/>
            <person name="Sharp S."/>
            <person name="Simmonds M.N."/>
            <person name="Spiegler S."/>
            <person name="Tivey A."/>
            <person name="Sugano S."/>
            <person name="White B."/>
            <person name="Walker D."/>
            <person name="Woodward J.R."/>
            <person name="Winckler T."/>
            <person name="Tanaka Y."/>
            <person name="Shaulsky G."/>
            <person name="Schleicher M."/>
            <person name="Weinstock G.M."/>
            <person name="Rosenthal A."/>
            <person name="Cox E.C."/>
            <person name="Chisholm R.L."/>
            <person name="Gibbs R.A."/>
            <person name="Loomis W.F."/>
            <person name="Platzer M."/>
            <person name="Kay R.R."/>
            <person name="Williams J.G."/>
            <person name="Dear P.H."/>
            <person name="Noegel A.A."/>
            <person name="Barrell B.G."/>
            <person name="Kuspa A."/>
        </authorList>
    </citation>
    <scope>NUCLEOTIDE SEQUENCE [LARGE SCALE GENOMIC DNA]</scope>
    <source>
        <strain>AX4</strain>
    </source>
</reference>
<reference key="2">
    <citation type="journal article" date="2005" name="Mol. Cell. Biol.">
        <title>Loss of SMEK, a novel, conserved protein, suppresses MEK1 null cell polarity, chemotaxis, and gene expression defects.</title>
        <authorList>
            <person name="Mendoza M.C."/>
            <person name="Du F."/>
            <person name="Iranfar N."/>
            <person name="Tang N."/>
            <person name="Ma H."/>
            <person name="Loomis W.F."/>
            <person name="Firtel R.A."/>
        </authorList>
    </citation>
    <scope>FUNCTION</scope>
    <scope>SUBCELLULAR LOCATION</scope>
    <scope>DOMAIN</scope>
    <scope>DEVELOPMENTAL STAGE</scope>
</reference>
<reference key="3">
    <citation type="journal article" date="2007" name="Mol. Cell. Biol.">
        <title>MEK1 and protein phosphatase 4 coordinate Dictyostelium development and chemotaxis.</title>
        <authorList>
            <person name="Mendoza M.C."/>
            <person name="Booth E.O."/>
            <person name="Shaulsky G."/>
            <person name="Firtel R.A."/>
        </authorList>
    </citation>
    <scope>FUNCTION</scope>
    <scope>SUBCELLULAR LOCATION</scope>
    <scope>INTERACTION WITH PPP4C</scope>
</reference>
<dbReference type="EMBL" id="AAFI02000129">
    <property type="protein sequence ID" value="EAL62912.1"/>
    <property type="molecule type" value="Genomic_DNA"/>
</dbReference>
<dbReference type="RefSeq" id="XP_636416.1">
    <property type="nucleotide sequence ID" value="XM_631324.1"/>
</dbReference>
<dbReference type="SMR" id="Q54I18"/>
<dbReference type="FunCoup" id="Q54I18">
    <property type="interactions" value="894"/>
</dbReference>
<dbReference type="IntAct" id="Q54I18">
    <property type="interactions" value="1"/>
</dbReference>
<dbReference type="STRING" id="44689.Q54I18"/>
<dbReference type="GlyGen" id="Q54I18">
    <property type="glycosylation" value="1 site"/>
</dbReference>
<dbReference type="PaxDb" id="44689-DDB0232046"/>
<dbReference type="EnsemblProtists" id="EAL62912">
    <property type="protein sequence ID" value="EAL62912"/>
    <property type="gene ID" value="DDB_G0289067"/>
</dbReference>
<dbReference type="GeneID" id="8626945"/>
<dbReference type="KEGG" id="ddi:DDB_G0289067"/>
<dbReference type="dictyBase" id="DDB_G0289067">
    <property type="gene designation" value="smkA"/>
</dbReference>
<dbReference type="VEuPathDB" id="AmoebaDB:DDB_G0289067"/>
<dbReference type="eggNOG" id="KOG2175">
    <property type="taxonomic scope" value="Eukaryota"/>
</dbReference>
<dbReference type="HOGENOM" id="CLU_004909_3_0_1"/>
<dbReference type="InParanoid" id="Q54I18"/>
<dbReference type="OMA" id="ALMTHNN"/>
<dbReference type="PhylomeDB" id="Q54I18"/>
<dbReference type="PRO" id="PR:Q54I18"/>
<dbReference type="Proteomes" id="UP000002195">
    <property type="component" value="Chromosome 5"/>
</dbReference>
<dbReference type="GO" id="GO:0005938">
    <property type="term" value="C:cell cortex"/>
    <property type="evidence" value="ECO:0000314"/>
    <property type="project" value="dictyBase"/>
</dbReference>
<dbReference type="GO" id="GO:0005654">
    <property type="term" value="C:nucleoplasm"/>
    <property type="evidence" value="ECO:0000318"/>
    <property type="project" value="GO_Central"/>
</dbReference>
<dbReference type="GO" id="GO:0005634">
    <property type="term" value="C:nucleus"/>
    <property type="evidence" value="ECO:0000314"/>
    <property type="project" value="dictyBase"/>
</dbReference>
<dbReference type="GO" id="GO:0030289">
    <property type="term" value="C:protein phosphatase 4 complex"/>
    <property type="evidence" value="ECO:0000314"/>
    <property type="project" value="dictyBase"/>
</dbReference>
<dbReference type="GO" id="GO:0072542">
    <property type="term" value="F:protein phosphatase activator activity"/>
    <property type="evidence" value="ECO:0000318"/>
    <property type="project" value="GO_Central"/>
</dbReference>
<dbReference type="GO" id="GO:0043327">
    <property type="term" value="P:chemotaxis to cAMP"/>
    <property type="evidence" value="ECO:0000315"/>
    <property type="project" value="dictyBase"/>
</dbReference>
<dbReference type="GO" id="GO:0006974">
    <property type="term" value="P:DNA damage response"/>
    <property type="evidence" value="ECO:0000318"/>
    <property type="project" value="GO_Central"/>
</dbReference>
<dbReference type="GO" id="GO:2000779">
    <property type="term" value="P:regulation of double-strand break repair"/>
    <property type="evidence" value="ECO:0000318"/>
    <property type="project" value="GO_Central"/>
</dbReference>
<dbReference type="GO" id="GO:0007165">
    <property type="term" value="P:signal transduction"/>
    <property type="evidence" value="ECO:0000316"/>
    <property type="project" value="dictyBase"/>
</dbReference>
<dbReference type="FunFam" id="2.30.29.30:FF:000051">
    <property type="entry name" value="Serine/threonine-protein phosphatase 4 regulatory subunit 3B"/>
    <property type="match status" value="1"/>
</dbReference>
<dbReference type="Gene3D" id="2.30.29.30">
    <property type="entry name" value="Pleckstrin-homology domain (PH domain)/Phosphotyrosine-binding domain (PTB)"/>
    <property type="match status" value="1"/>
</dbReference>
<dbReference type="InterPro" id="IPR016024">
    <property type="entry name" value="ARM-type_fold"/>
</dbReference>
<dbReference type="InterPro" id="IPR055236">
    <property type="entry name" value="EVH1_PP4R3"/>
</dbReference>
<dbReference type="InterPro" id="IPR006887">
    <property type="entry name" value="P4R3-like_central_dom"/>
</dbReference>
<dbReference type="InterPro" id="IPR011993">
    <property type="entry name" value="PH-like_dom_sf"/>
</dbReference>
<dbReference type="InterPro" id="IPR051137">
    <property type="entry name" value="PP4R3-like"/>
</dbReference>
<dbReference type="PANTHER" id="PTHR23318">
    <property type="entry name" value="ATP SYNTHASE GAMMA-RELATED"/>
    <property type="match status" value="1"/>
</dbReference>
<dbReference type="PANTHER" id="PTHR23318:SF0">
    <property type="entry name" value="SERINE_THREONINE-PROTEIN PHOSPHATASE 4 REGULATORY SUBUNIT 3"/>
    <property type="match status" value="1"/>
</dbReference>
<dbReference type="Pfam" id="PF22972">
    <property type="entry name" value="EVH1_PP4R3"/>
    <property type="match status" value="1"/>
</dbReference>
<dbReference type="Pfam" id="PF04802">
    <property type="entry name" value="PP4R3"/>
    <property type="match status" value="1"/>
</dbReference>
<dbReference type="SUPFAM" id="SSF48371">
    <property type="entry name" value="ARM repeat"/>
    <property type="match status" value="1"/>
</dbReference>
<dbReference type="SUPFAM" id="SSF50729">
    <property type="entry name" value="PH domain-like"/>
    <property type="match status" value="1"/>
</dbReference>
<protein>
    <recommendedName>
        <fullName>Suppressor of Mek1</fullName>
        <shortName>SMEK</shortName>
    </recommendedName>
</protein>
<feature type="chain" id="PRO_0000254608" description="Suppressor of Mek1">
    <location>
        <begin position="1"/>
        <end position="1046"/>
    </location>
</feature>
<feature type="domain" description="WH1">
    <location>
        <begin position="1"/>
        <end position="101"/>
    </location>
</feature>
<feature type="region of interest" description="Disordered" evidence="1">
    <location>
        <begin position="626"/>
        <end position="1046"/>
    </location>
</feature>
<feature type="short sequence motif" description="Nuclear localization signal">
    <location>
        <begin position="1003"/>
        <end position="1022"/>
    </location>
</feature>
<feature type="compositionally biased region" description="Acidic residues" evidence="1">
    <location>
        <begin position="665"/>
        <end position="689"/>
    </location>
</feature>
<feature type="compositionally biased region" description="Low complexity" evidence="1">
    <location>
        <begin position="695"/>
        <end position="713"/>
    </location>
</feature>
<feature type="compositionally biased region" description="Basic and acidic residues" evidence="1">
    <location>
        <begin position="714"/>
        <end position="727"/>
    </location>
</feature>
<feature type="compositionally biased region" description="Acidic residues" evidence="1">
    <location>
        <begin position="743"/>
        <end position="752"/>
    </location>
</feature>
<feature type="compositionally biased region" description="Basic and acidic residues" evidence="1">
    <location>
        <begin position="753"/>
        <end position="783"/>
    </location>
</feature>
<feature type="compositionally biased region" description="Acidic residues" evidence="1">
    <location>
        <begin position="784"/>
        <end position="803"/>
    </location>
</feature>
<feature type="compositionally biased region" description="Low complexity" evidence="1">
    <location>
        <begin position="804"/>
        <end position="820"/>
    </location>
</feature>
<feature type="compositionally biased region" description="Basic and acidic residues" evidence="1">
    <location>
        <begin position="826"/>
        <end position="855"/>
    </location>
</feature>
<feature type="compositionally biased region" description="Basic and acidic residues" evidence="1">
    <location>
        <begin position="862"/>
        <end position="876"/>
    </location>
</feature>
<feature type="compositionally biased region" description="Low complexity" evidence="1">
    <location>
        <begin position="889"/>
        <end position="905"/>
    </location>
</feature>
<feature type="compositionally biased region" description="Basic and acidic residues" evidence="1">
    <location>
        <begin position="909"/>
        <end position="935"/>
    </location>
</feature>
<feature type="compositionally biased region" description="Low complexity" evidence="1">
    <location>
        <begin position="958"/>
        <end position="995"/>
    </location>
</feature>
<feature type="compositionally biased region" description="Acidic residues" evidence="1">
    <location>
        <begin position="996"/>
        <end position="1011"/>
    </location>
</feature>
<feature type="compositionally biased region" description="Low complexity" evidence="1">
    <location>
        <begin position="1028"/>
        <end position="1038"/>
    </location>
</feature>
<sequence length="1046" mass="119988">MEPLRKRVKVYQLDNSGKWDDKGTGHVSCIYVDALCAMGLIVRSESDNSVILQTRLSAEDIYQKQQDSLIVWTEPDSQLDLALSFQDSLGCQDIWENILQYQNQRTGSCDSVDLDLPPVSINNLQTINELLEASLPMLDKDKIINSIFKEDLVRSLLDLFDEIEKSGEGGVHLFQIFNIFKNLILFNDTSILEVILSEDYLVRVMGALEYDPEISENNRIKHREFLNQQVVFKQVIKFPSKSLIGTIHQTFRIQYLKDVVLPRVLDDVTFSSLNSLIYFNNIDIVSQIQNDSDFLENLFSEIQKSEKNSEERKDLILFLQDLCNLAKGLQIQSKSTFFTVVVSLGLFKTLSAILDDENVQTRVSCTEIVLSTLLHDPEILRSYLCSPTSGNSKFLVQLINLFITDKDIGVKNQIVEIIKTLLEADSYDSSDFFRLFYDKGIDLLVSPLNEVYKGEPTIPGDPSSNLDSFVLYNIMELVIYCIKHHCYRIKHFIVEEGIAKKILRYTNPTGSGGGGGGGGNSERYLILGSIRFFRSMVNMKDDLYNQHIIQENLFEPIIEVFKSNISRYNLLNSAIIELFQYIYKENIRDLIVYLVERYRELFESVTYTDVLKQLILKYEQIKDSSFESPETSCNNNDSSSNDIDSKPIIGNNKINHNYQRTQREIDEEEEEAYFNRDDDSEDSDDEDELIPISINNNNNNNNNNKQICTNNENNMEKNDDNIEKDNENTNNGNGSSHIKIVDYEDEDDEDDEINKSVESDDIVEKHEIIDKNEKKDEIMKENNDSDNDDNDNNDNDNDNDNNSDIENKNHLNNNGNNENNENNDDVQDKSNNKNNSDKINEDEKIEKQDEMKENLEMEEIDEKVKEKQPKDIKKENQSQPDETVFNGKSNNSNNNNNNNNNNSNNQEIGDNRKTTPKRKLDYEKNESVVSKKIDKSNGPTSIDKDINGCDESPNKKLNNNNSNNNNNNNNNNNNNNNNNNNNNNNNNNNNNNNQNDENELSSASEEEEEQLENGKHIKKFKRGKKDSNNSSNNSNNSSPTPSELHV</sequence>
<gene>
    <name type="primary">smkA</name>
    <name type="ORF">DDB_G0289067</name>
</gene>
<accession>Q54I18</accession>
<keyword id="KW-0963">Cytoplasm</keyword>
<keyword id="KW-0539">Nucleus</keyword>
<keyword id="KW-1185">Reference proteome</keyword>
<proteinExistence type="evidence at protein level"/>
<comment type="function">
    <text evidence="2 3">Suppresses MEK1 null cell polarity, chemotaxis, and gene expression defects. Required for proper cytokinesis during vegetative growth, timely exit from the mound stage during development, and myosin II assembly. May be a regulatory subunit of serine/threonine-protein phosphatase 4 (PP4) and may control localization of PP4 to the nucleus. Involved in the regulation of some ppp4c functions, such as developmental progression, chemotaxis, expression of stress response genes and cell movement.</text>
</comment>
<comment type="subunit">
    <text evidence="3">Interacts with ppp4c.</text>
</comment>
<comment type="interaction">
    <interactant intactId="EBI-2015890">
        <id>Q54I18</id>
    </interactant>
    <interactant intactId="EBI-2015876">
        <id>Q9Y0B7</id>
        <label>ppp4c</label>
    </interactant>
    <organismsDiffer>false</organismsDiffer>
    <experiments>2</experiments>
</comment>
<comment type="subcellular location">
    <subcellularLocation>
        <location evidence="2">Cytoplasm</location>
        <location evidence="2">Cell cortex</location>
    </subcellularLocation>
    <subcellularLocation>
        <location evidence="2">Nucleus</location>
    </subcellularLocation>
    <text>Localizes to the cell cortex in vegetative cells but translocates to the nucleus during starvation and development (PubMed:16107728).</text>
</comment>
<comment type="developmental stage">
    <text evidence="2">Levels are constant throughout development.</text>
</comment>
<comment type="domain">
    <text evidence="2">The EVH1/WH1 domain is necessary for cortical localization.</text>
</comment>
<comment type="similarity">
    <text evidence="4">Belongs to the SMEK family.</text>
</comment>
<name>SMEK_DICDI</name>
<organism>
    <name type="scientific">Dictyostelium discoideum</name>
    <name type="common">Social amoeba</name>
    <dbReference type="NCBI Taxonomy" id="44689"/>
    <lineage>
        <taxon>Eukaryota</taxon>
        <taxon>Amoebozoa</taxon>
        <taxon>Evosea</taxon>
        <taxon>Eumycetozoa</taxon>
        <taxon>Dictyostelia</taxon>
        <taxon>Dictyosteliales</taxon>
        <taxon>Dictyosteliaceae</taxon>
        <taxon>Dictyostelium</taxon>
    </lineage>
</organism>